<evidence type="ECO:0000255" key="1">
    <source>
        <dbReference type="HAMAP-Rule" id="MF_00174"/>
    </source>
</evidence>
<reference key="1">
    <citation type="journal article" date="2009" name="PLoS Genet.">
        <title>Organised genome dynamics in the Escherichia coli species results in highly diverse adaptive paths.</title>
        <authorList>
            <person name="Touchon M."/>
            <person name="Hoede C."/>
            <person name="Tenaillon O."/>
            <person name="Barbe V."/>
            <person name="Baeriswyl S."/>
            <person name="Bidet P."/>
            <person name="Bingen E."/>
            <person name="Bonacorsi S."/>
            <person name="Bouchier C."/>
            <person name="Bouvet O."/>
            <person name="Calteau A."/>
            <person name="Chiapello H."/>
            <person name="Clermont O."/>
            <person name="Cruveiller S."/>
            <person name="Danchin A."/>
            <person name="Diard M."/>
            <person name="Dossat C."/>
            <person name="Karoui M.E."/>
            <person name="Frapy E."/>
            <person name="Garry L."/>
            <person name="Ghigo J.M."/>
            <person name="Gilles A.M."/>
            <person name="Johnson J."/>
            <person name="Le Bouguenec C."/>
            <person name="Lescat M."/>
            <person name="Mangenot S."/>
            <person name="Martinez-Jehanne V."/>
            <person name="Matic I."/>
            <person name="Nassif X."/>
            <person name="Oztas S."/>
            <person name="Petit M.A."/>
            <person name="Pichon C."/>
            <person name="Rouy Z."/>
            <person name="Ruf C.S."/>
            <person name="Schneider D."/>
            <person name="Tourret J."/>
            <person name="Vacherie B."/>
            <person name="Vallenet D."/>
            <person name="Medigue C."/>
            <person name="Rocha E.P.C."/>
            <person name="Denamur E."/>
        </authorList>
    </citation>
    <scope>NUCLEOTIDE SEQUENCE [LARGE SCALE GENOMIC DNA]</scope>
    <source>
        <strain>IAI1</strain>
    </source>
</reference>
<gene>
    <name evidence="1" type="primary">epmA</name>
    <name type="synonym">yjeA</name>
    <name type="ordered locus">ECIAI1_4392</name>
</gene>
<proteinExistence type="inferred from homology"/>
<accession>B7M8S0</accession>
<keyword id="KW-0067">ATP-binding</keyword>
<keyword id="KW-0436">Ligase</keyword>
<keyword id="KW-0547">Nucleotide-binding</keyword>
<comment type="function">
    <text evidence="1">With EpmB is involved in the beta-lysylation step of the post-translational modification of translation elongation factor P (EF-P) on 'Lys-34'. Catalyzes the ATP-dependent activation of (R)-beta-lysine produced by EpmB, forming a lysyl-adenylate, from which the beta-lysyl moiety is then transferred to the epsilon-amino group of EF-P 'Lys-34'.</text>
</comment>
<comment type="catalytic activity">
    <reaction evidence="1">
        <text>D-beta-lysine + L-lysyl-[protein] + ATP = N(6)-((3R)-3,6-diaminohexanoyl)-L-lysyl-[protein] + AMP + diphosphate + H(+)</text>
        <dbReference type="Rhea" id="RHEA:83435"/>
        <dbReference type="Rhea" id="RHEA-COMP:9752"/>
        <dbReference type="Rhea" id="RHEA-COMP:20131"/>
        <dbReference type="ChEBI" id="CHEBI:15378"/>
        <dbReference type="ChEBI" id="CHEBI:29969"/>
        <dbReference type="ChEBI" id="CHEBI:30616"/>
        <dbReference type="ChEBI" id="CHEBI:33019"/>
        <dbReference type="ChEBI" id="CHEBI:84138"/>
        <dbReference type="ChEBI" id="CHEBI:156053"/>
        <dbReference type="ChEBI" id="CHEBI:456215"/>
    </reaction>
    <physiologicalReaction direction="left-to-right" evidence="1">
        <dbReference type="Rhea" id="RHEA:83436"/>
    </physiologicalReaction>
</comment>
<comment type="subunit">
    <text evidence="1">Homodimer.</text>
</comment>
<comment type="similarity">
    <text evidence="1">Belongs to the class-II aminoacyl-tRNA synthetase family. EpmA subfamily.</text>
</comment>
<name>EPMA_ECO8A</name>
<dbReference type="EC" id="6.3.2.-" evidence="1"/>
<dbReference type="EMBL" id="CU928160">
    <property type="protein sequence ID" value="CAR01135.1"/>
    <property type="molecule type" value="Genomic_DNA"/>
</dbReference>
<dbReference type="RefSeq" id="WP_000004771.1">
    <property type="nucleotide sequence ID" value="NC_011741.1"/>
</dbReference>
<dbReference type="SMR" id="B7M8S0"/>
<dbReference type="GeneID" id="93777667"/>
<dbReference type="KEGG" id="ecr:ECIAI1_4392"/>
<dbReference type="HOGENOM" id="CLU_008255_1_1_6"/>
<dbReference type="GO" id="GO:0005829">
    <property type="term" value="C:cytosol"/>
    <property type="evidence" value="ECO:0007669"/>
    <property type="project" value="TreeGrafter"/>
</dbReference>
<dbReference type="GO" id="GO:0016880">
    <property type="term" value="F:acid-ammonia (or amide) ligase activity"/>
    <property type="evidence" value="ECO:0007669"/>
    <property type="project" value="UniProtKB-UniRule"/>
</dbReference>
<dbReference type="GO" id="GO:0005524">
    <property type="term" value="F:ATP binding"/>
    <property type="evidence" value="ECO:0007669"/>
    <property type="project" value="UniProtKB-UniRule"/>
</dbReference>
<dbReference type="GO" id="GO:0004824">
    <property type="term" value="F:lysine-tRNA ligase activity"/>
    <property type="evidence" value="ECO:0007669"/>
    <property type="project" value="InterPro"/>
</dbReference>
<dbReference type="GO" id="GO:0000049">
    <property type="term" value="F:tRNA binding"/>
    <property type="evidence" value="ECO:0007669"/>
    <property type="project" value="TreeGrafter"/>
</dbReference>
<dbReference type="GO" id="GO:0006430">
    <property type="term" value="P:lysyl-tRNA aminoacylation"/>
    <property type="evidence" value="ECO:0007669"/>
    <property type="project" value="InterPro"/>
</dbReference>
<dbReference type="FunFam" id="3.30.930.10:FF:000017">
    <property type="entry name" value="Elongation factor P--(R)-beta-lysine ligase"/>
    <property type="match status" value="1"/>
</dbReference>
<dbReference type="Gene3D" id="3.30.930.10">
    <property type="entry name" value="Bira Bifunctional Protein, Domain 2"/>
    <property type="match status" value="1"/>
</dbReference>
<dbReference type="HAMAP" id="MF_00174">
    <property type="entry name" value="EF_P_modif_A"/>
    <property type="match status" value="1"/>
</dbReference>
<dbReference type="InterPro" id="IPR004364">
    <property type="entry name" value="Aa-tRNA-synt_II"/>
</dbReference>
<dbReference type="InterPro" id="IPR006195">
    <property type="entry name" value="aa-tRNA-synth_II"/>
</dbReference>
<dbReference type="InterPro" id="IPR045864">
    <property type="entry name" value="aa-tRNA-synth_II/BPL/LPL"/>
</dbReference>
<dbReference type="InterPro" id="IPR004525">
    <property type="entry name" value="EpmA"/>
</dbReference>
<dbReference type="InterPro" id="IPR018149">
    <property type="entry name" value="Lys-tRNA-synth_II_C"/>
</dbReference>
<dbReference type="NCBIfam" id="TIGR00462">
    <property type="entry name" value="genX"/>
    <property type="match status" value="1"/>
</dbReference>
<dbReference type="NCBIfam" id="NF006828">
    <property type="entry name" value="PRK09350.1"/>
    <property type="match status" value="1"/>
</dbReference>
<dbReference type="PANTHER" id="PTHR42918:SF6">
    <property type="entry name" value="ELONGATION FACTOR P--(R)-BETA-LYSINE LIGASE"/>
    <property type="match status" value="1"/>
</dbReference>
<dbReference type="PANTHER" id="PTHR42918">
    <property type="entry name" value="LYSYL-TRNA SYNTHETASE"/>
    <property type="match status" value="1"/>
</dbReference>
<dbReference type="Pfam" id="PF00152">
    <property type="entry name" value="tRNA-synt_2"/>
    <property type="match status" value="1"/>
</dbReference>
<dbReference type="PRINTS" id="PR00982">
    <property type="entry name" value="TRNASYNTHLYS"/>
</dbReference>
<dbReference type="SUPFAM" id="SSF55681">
    <property type="entry name" value="Class II aaRS and biotin synthetases"/>
    <property type="match status" value="1"/>
</dbReference>
<dbReference type="PROSITE" id="PS50862">
    <property type="entry name" value="AA_TRNA_LIGASE_II"/>
    <property type="match status" value="1"/>
</dbReference>
<protein>
    <recommendedName>
        <fullName evidence="1">Elongation factor P--(R)-beta-lysine ligase</fullName>
        <shortName evidence="1">EF-P--(R)-beta-lysine ligase</shortName>
        <ecNumber evidence="1">6.3.2.-</ecNumber>
    </recommendedName>
    <alternativeName>
        <fullName evidence="1">EF-P post-translational modification enzyme A</fullName>
    </alternativeName>
    <alternativeName>
        <fullName evidence="1">EF-P-lysine lysyltransferase</fullName>
    </alternativeName>
</protein>
<feature type="chain" id="PRO_1000199260" description="Elongation factor P--(R)-beta-lysine ligase">
    <location>
        <begin position="1"/>
        <end position="325"/>
    </location>
</feature>
<feature type="binding site" evidence="1">
    <location>
        <begin position="76"/>
        <end position="78"/>
    </location>
    <ligand>
        <name>substrate</name>
    </ligand>
</feature>
<feature type="binding site" evidence="1">
    <location>
        <begin position="100"/>
        <end position="102"/>
    </location>
    <ligand>
        <name>ATP</name>
        <dbReference type="ChEBI" id="CHEBI:30616"/>
    </ligand>
</feature>
<feature type="binding site" evidence="1">
    <location>
        <position position="109"/>
    </location>
    <ligand>
        <name>ATP</name>
        <dbReference type="ChEBI" id="CHEBI:30616"/>
    </ligand>
</feature>
<feature type="binding site" evidence="1">
    <location>
        <position position="118"/>
    </location>
    <ligand>
        <name>substrate</name>
    </ligand>
</feature>
<feature type="binding site" evidence="1">
    <location>
        <begin position="244"/>
        <end position="245"/>
    </location>
    <ligand>
        <name>ATP</name>
        <dbReference type="ChEBI" id="CHEBI:30616"/>
    </ligand>
</feature>
<feature type="binding site" evidence="1">
    <location>
        <position position="251"/>
    </location>
    <ligand>
        <name>substrate</name>
    </ligand>
</feature>
<feature type="binding site" evidence="1">
    <location>
        <position position="300"/>
    </location>
    <ligand>
        <name>ATP</name>
        <dbReference type="ChEBI" id="CHEBI:30616"/>
    </ligand>
</feature>
<sequence length="325" mass="36976">MSETASWQPSASIPNLLKRAAIMAEIRRFFADRGVLEVETPCMSQATVTDIHLVPFETRFVGPGHSQGMNLWLMTSPEYHMKRLLVAGCGPVFQLCRSFRNEEMGRYHNPEFTMLEWYRPHYDMYRLMNEVDDLLQQVLDCPAAESLSYQQAFLRYLEIDPLSADKTQLREVAAKLDLSNVADTEEDRDTLLQLLFTFGVEPNIGKEKPTFVYHFPASQASLAQISTEDHRVAERFEVYYKGIELANGFHELTDAREQQQRFEQDNRKRAARGLPQHPIDQNLIEALKVGMPDCSGVALGVDRLVMLALGAETLAEVIAFSVDRA</sequence>
<organism>
    <name type="scientific">Escherichia coli O8 (strain IAI1)</name>
    <dbReference type="NCBI Taxonomy" id="585034"/>
    <lineage>
        <taxon>Bacteria</taxon>
        <taxon>Pseudomonadati</taxon>
        <taxon>Pseudomonadota</taxon>
        <taxon>Gammaproteobacteria</taxon>
        <taxon>Enterobacterales</taxon>
        <taxon>Enterobacteriaceae</taxon>
        <taxon>Escherichia</taxon>
    </lineage>
</organism>